<keyword id="KW-0903">Direct protein sequencing</keyword>
<keyword id="KW-0521">NADP</keyword>
<keyword id="KW-0560">Oxidoreductase</keyword>
<feature type="chain" id="PRO_0000424161" description="Versiconal hemiacetal acetate reductase">
    <location>
        <begin position="1"/>
        <end position="343"/>
    </location>
</feature>
<feature type="active site" description="Proton donor" evidence="1">
    <location>
        <position position="59"/>
    </location>
</feature>
<feature type="binding site" evidence="1">
    <location>
        <position position="144"/>
    </location>
    <ligand>
        <name>substrate</name>
    </ligand>
</feature>
<feature type="binding site" evidence="1">
    <location>
        <begin position="229"/>
        <end position="239"/>
    </location>
    <ligand>
        <name>NADP(+)</name>
        <dbReference type="ChEBI" id="CHEBI:58349"/>
    </ligand>
</feature>
<feature type="site" description="Lowers pKa of active site Tyr" evidence="1">
    <location>
        <position position="87"/>
    </location>
</feature>
<proteinExistence type="evidence at protein level"/>
<accession>B9WYE6</accession>
<protein>
    <recommendedName>
        <fullName>Versiconal hemiacetal acetate reductase</fullName>
        <ecNumber>1.1.1.353</ecNumber>
    </recommendedName>
    <alternativeName>
        <fullName>VHA reductase</fullName>
    </alternativeName>
</protein>
<name>VRDA_ASPPA</name>
<organism>
    <name type="scientific">Aspergillus parasiticus</name>
    <dbReference type="NCBI Taxonomy" id="5067"/>
    <lineage>
        <taxon>Eukaryota</taxon>
        <taxon>Fungi</taxon>
        <taxon>Dikarya</taxon>
        <taxon>Ascomycota</taxon>
        <taxon>Pezizomycotina</taxon>
        <taxon>Eurotiomycetes</taxon>
        <taxon>Eurotiomycetidae</taxon>
        <taxon>Eurotiales</taxon>
        <taxon>Aspergillaceae</taxon>
        <taxon>Aspergillus</taxon>
        <taxon>Aspergillus subgen. Circumdati</taxon>
    </lineage>
</organism>
<comment type="function">
    <text evidence="2">Catalyzes 3 reactions: from hydroxyversicolorone (HVN) to versicolorone (VONE), from versiconal hemiacetal acetate (VHA) to versiconol acetate (VOAc) and from versiconal (VHOH) to versiconol (VOH). Probably not an aflatoxin biosynthesis gene: may be involved in the vertical branching steps connecting the main pathway from HVN to VHOH with the side pathway from VONE to VOH.</text>
</comment>
<comment type="catalytic activity">
    <reaction evidence="2">
        <text>(2S)-versicolorone + NADP(+) = 1'-hydroxyversicolorone + NADPH + H(+)</text>
        <dbReference type="Rhea" id="RHEA:35691"/>
        <dbReference type="ChEBI" id="CHEBI:15378"/>
        <dbReference type="ChEBI" id="CHEBI:57783"/>
        <dbReference type="ChEBI" id="CHEBI:58349"/>
        <dbReference type="ChEBI" id="CHEBI:73281"/>
        <dbReference type="ChEBI" id="CHEBI:77907"/>
        <dbReference type="EC" id="1.1.1.353"/>
    </reaction>
</comment>
<comment type="catalytic activity">
    <reaction evidence="2">
        <text>(3S)-versiconol acetate + NADP(+) = (2S,3S)-versiconal hemiacetal acetate + NADPH + H(+)</text>
        <dbReference type="Rhea" id="RHEA:35695"/>
        <dbReference type="ChEBI" id="CHEBI:15378"/>
        <dbReference type="ChEBI" id="CHEBI:57783"/>
        <dbReference type="ChEBI" id="CHEBI:58349"/>
        <dbReference type="ChEBI" id="CHEBI:72673"/>
        <dbReference type="ChEBI" id="CHEBI:77975"/>
        <dbReference type="EC" id="1.1.1.353"/>
    </reaction>
</comment>
<comment type="catalytic activity">
    <reaction evidence="2">
        <text>(S)-versiconol + NADP(+) = (2S-3S)-versiconal hemiacetal + NADPH + H(+)</text>
        <dbReference type="Rhea" id="RHEA:35699"/>
        <dbReference type="ChEBI" id="CHEBI:15378"/>
        <dbReference type="ChEBI" id="CHEBI:57783"/>
        <dbReference type="ChEBI" id="CHEBI:58349"/>
        <dbReference type="ChEBI" id="CHEBI:77947"/>
        <dbReference type="ChEBI" id="CHEBI:77950"/>
        <dbReference type="EC" id="1.1.1.353"/>
    </reaction>
</comment>
<comment type="disruption phenotype">
    <text evidence="2">Aflatoxin production is not inhibited, while the enzyme activity catalyzing the reaction from versiconal hemiacetal acetate (VHA), to versiconol acetate (VOAc), which branches from the main pathway, significantly decreases.</text>
</comment>
<comment type="similarity">
    <text evidence="3">Belongs to the aldo/keto reductase family. Aldo/keto reductase 2 subfamily.</text>
</comment>
<reference key="1">
    <citation type="journal article" date="2009" name="Fungal Genet. Biol.">
        <title>Participation in aflatoxin biosynthesis by a reductase enzyme encoded by vrdA gene outside the aflatoxin gene cluster.</title>
        <authorList>
            <person name="Shima Y."/>
            <person name="Shiina M."/>
            <person name="Shinozawa T."/>
            <person name="Ito Y."/>
            <person name="Nakajima H."/>
            <person name="Adachi Y."/>
            <person name="Yabe K."/>
        </authorList>
    </citation>
    <scope>NUCLEOTIDE SEQUENCE [GENOMIC DNA / MRNA]</scope>
    <scope>PROTEIN SEQUENCE OF 3-27 AND 214-25</scope>
    <scope>FUNCTION</scope>
    <scope>CATALYTIC ACTIVITY</scope>
    <scope>PATHWAY</scope>
    <scope>DISRUPTION PHENOTYPE</scope>
    <source>
        <strain>ATCC 26691 / NRRL 2999 / CBS 921.70</strain>
    </source>
</reference>
<reference key="2">
    <citation type="journal article" date="1994" name="Appl. Environ. Microbiol.">
        <title>Purification and characterization of two versiconal hemiacetal acetate reductases involved in aflatoxin biosynthesis.</title>
        <authorList>
            <person name="Matsushima K."/>
            <person name="Ando Y."/>
            <person name="Hamasaki T."/>
            <person name="Yabe K."/>
        </authorList>
    </citation>
    <scope>IDENTIFICATION</scope>
</reference>
<dbReference type="EC" id="1.1.1.353"/>
<dbReference type="EMBL" id="AB025578">
    <property type="protein sequence ID" value="BAH24200.1"/>
    <property type="molecule type" value="Genomic_DNA"/>
</dbReference>
<dbReference type="EMBL" id="AB025579">
    <property type="protein sequence ID" value="BAH24201.1"/>
    <property type="molecule type" value="mRNA"/>
</dbReference>
<dbReference type="SMR" id="B9WYE6"/>
<dbReference type="KEGG" id="ag:BAH24200"/>
<dbReference type="VEuPathDB" id="FungiDB:BDV34DRAFT_213479"/>
<dbReference type="BRENDA" id="1.1.1.353">
    <property type="organism ID" value="523"/>
</dbReference>
<dbReference type="GO" id="GO:0102974">
    <property type="term" value="F:hydroxyversicolorone reductase activity"/>
    <property type="evidence" value="ECO:0007669"/>
    <property type="project" value="RHEA"/>
</dbReference>
<dbReference type="GO" id="GO:0102975">
    <property type="term" value="F:versiconal hemiacetal acetate reductase activity"/>
    <property type="evidence" value="ECO:0007669"/>
    <property type="project" value="RHEA"/>
</dbReference>
<dbReference type="GO" id="GO:0102976">
    <property type="term" value="F:versiconal reductase activity"/>
    <property type="evidence" value="ECO:0007669"/>
    <property type="project" value="RHEA"/>
</dbReference>
<dbReference type="CDD" id="cd19079">
    <property type="entry name" value="AKR_EcYajO-like"/>
    <property type="match status" value="1"/>
</dbReference>
<dbReference type="FunFam" id="3.20.20.100:FF:000004">
    <property type="entry name" value="Oxidoreductase, aldo/keto reductase"/>
    <property type="match status" value="1"/>
</dbReference>
<dbReference type="Gene3D" id="3.20.20.100">
    <property type="entry name" value="NADP-dependent oxidoreductase domain"/>
    <property type="match status" value="1"/>
</dbReference>
<dbReference type="InterPro" id="IPR050523">
    <property type="entry name" value="AKR_Detox_Biosynth"/>
</dbReference>
<dbReference type="InterPro" id="IPR023210">
    <property type="entry name" value="NADP_OxRdtase_dom"/>
</dbReference>
<dbReference type="InterPro" id="IPR036812">
    <property type="entry name" value="NADP_OxRdtase_dom_sf"/>
</dbReference>
<dbReference type="PANTHER" id="PTHR43364:SF15">
    <property type="entry name" value="ARYL-ALCOHOL DEHYDROGENASE AAD16-RELATED"/>
    <property type="match status" value="1"/>
</dbReference>
<dbReference type="PANTHER" id="PTHR43364">
    <property type="entry name" value="NADH-SPECIFIC METHYLGLYOXAL REDUCTASE-RELATED"/>
    <property type="match status" value="1"/>
</dbReference>
<dbReference type="Pfam" id="PF00248">
    <property type="entry name" value="Aldo_ket_red"/>
    <property type="match status" value="1"/>
</dbReference>
<dbReference type="SUPFAM" id="SSF51430">
    <property type="entry name" value="NAD(P)-linked oxidoreductase"/>
    <property type="match status" value="1"/>
</dbReference>
<evidence type="ECO:0000250" key="1"/>
<evidence type="ECO:0000269" key="2">
    <source>
    </source>
</evidence>
<evidence type="ECO:0000305" key="3"/>
<sequence>MEYARLGDSGLKVSKVILGCMGYGSPEWQGWVLNEEESLPLIEHAYNKGIRTWDTADMYSHGKSEEIVGKALKKYNIPRSRVVILTKCYFGVDDQGNFPSPLSTGRQNEGDYLNRVGLSRRHILEAVDASVERLGTYIDVLQIHRLDRETPREEIMRALNDVVESGKARYIGASSMAAWEFQTLQNIAIRNGWHKFISMQNYHNLIAREEEREMIPYCLDSGVSLIPWSPVARGALARPWASRSTLRENTDAGISILVRARESESDKAIIDRVEELADKKGISMAQVAIAWSLSHPSEYPIVGLNTKDRIDEAVASVQVKLTPEEIQYLEEPYVPKAIHPGER</sequence>
<gene>
    <name type="primary">vrdA</name>
</gene>